<evidence type="ECO:0000250" key="1"/>
<evidence type="ECO:0000250" key="2">
    <source>
        <dbReference type="UniProtKB" id="P06539"/>
    </source>
</evidence>
<evidence type="ECO:0000305" key="3"/>
<name>PHCB2_SYNP6</name>
<reference key="1">
    <citation type="journal article" date="2007" name="Photosyn. Res.">
        <title>Complete nucleotide sequence of the freshwater unicellular cyanobacterium Synechococcus elongatus PCC 6301 chromosome: gene content and organization.</title>
        <authorList>
            <person name="Sugita C."/>
            <person name="Ogata K."/>
            <person name="Shikata M."/>
            <person name="Jikuya H."/>
            <person name="Takano J."/>
            <person name="Furumichi M."/>
            <person name="Kanehisa M."/>
            <person name="Omata T."/>
            <person name="Sugiura M."/>
            <person name="Sugita M."/>
        </authorList>
    </citation>
    <scope>NUCLEOTIDE SEQUENCE [LARGE SCALE GENOMIC DNA]</scope>
    <source>
        <strain>ATCC 27144 / PCC 6301 / SAUG 1402/1</strain>
    </source>
</reference>
<feature type="initiator methionine" description="Removed" evidence="1">
    <location>
        <position position="1"/>
    </location>
</feature>
<feature type="chain" id="PRO_0000199159" description="C-phycocyanin-2 beta subunit">
    <location>
        <begin position="2"/>
        <end position="173"/>
    </location>
</feature>
<feature type="binding site" description="covalent" evidence="2">
    <location>
        <position position="83"/>
    </location>
    <ligand>
        <name>(2R,3E)-phycocyanobilin</name>
        <dbReference type="ChEBI" id="CHEBI:85275"/>
        <label>1</label>
    </ligand>
</feature>
<feature type="binding site" description="covalent" evidence="2">
    <location>
        <position position="154"/>
    </location>
    <ligand>
        <name>(2R,3E)-phycocyanobilin</name>
        <dbReference type="ChEBI" id="CHEBI:85275"/>
        <label>2</label>
    </ligand>
</feature>
<feature type="modified residue" description="N4-methylasparagine" evidence="2">
    <location>
        <position position="73"/>
    </location>
</feature>
<comment type="function">
    <text evidence="1">Light-harvesting photosynthetic bile pigment-protein from the phycobiliprotein complex (phycobilisome, PBS). Phycocyanin is the major phycobiliprotein in the PBS rod.</text>
</comment>
<comment type="subunit">
    <text evidence="2">Heterodimer of an alpha and a beta subunit, which further assembles into trimers and the trimers into hexamers.</text>
</comment>
<comment type="subcellular location">
    <subcellularLocation>
        <location evidence="1">Cellular thylakoid membrane</location>
        <topology evidence="1">Peripheral membrane protein</topology>
        <orientation evidence="1">Cytoplasmic side</orientation>
    </subcellularLocation>
    <text evidence="1">Part of the phycobilisome rod.</text>
</comment>
<comment type="PTM">
    <text evidence="1 2">Contains two covalently linked bilin chromophores.</text>
</comment>
<comment type="similarity">
    <text evidence="3">Belongs to the phycobiliprotein family.</text>
</comment>
<proteinExistence type="inferred from homology"/>
<organism>
    <name type="scientific">Synechococcus sp. (strain ATCC 27144 / PCC 6301 / SAUG 1402/1)</name>
    <name type="common">Anacystis nidulans</name>
    <dbReference type="NCBI Taxonomy" id="269084"/>
    <lineage>
        <taxon>Bacteria</taxon>
        <taxon>Bacillati</taxon>
        <taxon>Cyanobacteriota</taxon>
        <taxon>Cyanophyceae</taxon>
        <taxon>Synechococcales</taxon>
        <taxon>Synechococcaceae</taxon>
        <taxon>Synechococcus</taxon>
    </lineage>
</organism>
<accession>Q5N4S8</accession>
<gene>
    <name type="primary">cpcB2</name>
    <name type="ordered locus">syc0501_c</name>
</gene>
<protein>
    <recommendedName>
        <fullName>C-phycocyanin-2 beta subunit</fullName>
    </recommendedName>
</protein>
<dbReference type="EMBL" id="AP008231">
    <property type="protein sequence ID" value="BAD78691.1"/>
    <property type="molecule type" value="Genomic_DNA"/>
</dbReference>
<dbReference type="RefSeq" id="WP_011242813.1">
    <property type="nucleotide sequence ID" value="NC_006576.1"/>
</dbReference>
<dbReference type="SMR" id="Q5N4S8"/>
<dbReference type="KEGG" id="syc:syc0501_c"/>
<dbReference type="eggNOG" id="ENOG502Z7NE">
    <property type="taxonomic scope" value="Bacteria"/>
</dbReference>
<dbReference type="Proteomes" id="UP000001175">
    <property type="component" value="Chromosome"/>
</dbReference>
<dbReference type="GO" id="GO:0030089">
    <property type="term" value="C:phycobilisome"/>
    <property type="evidence" value="ECO:0007669"/>
    <property type="project" value="UniProtKB-KW"/>
</dbReference>
<dbReference type="GO" id="GO:0031676">
    <property type="term" value="C:plasma membrane-derived thylakoid membrane"/>
    <property type="evidence" value="ECO:0007669"/>
    <property type="project" value="UniProtKB-SubCell"/>
</dbReference>
<dbReference type="GO" id="GO:0015979">
    <property type="term" value="P:photosynthesis"/>
    <property type="evidence" value="ECO:0007669"/>
    <property type="project" value="UniProtKB-KW"/>
</dbReference>
<dbReference type="CDD" id="cd14768">
    <property type="entry name" value="PC_PEC_beta"/>
    <property type="match status" value="1"/>
</dbReference>
<dbReference type="Gene3D" id="1.10.490.20">
    <property type="entry name" value="Phycocyanins"/>
    <property type="match status" value="1"/>
</dbReference>
<dbReference type="InterPro" id="IPR009050">
    <property type="entry name" value="Globin-like_sf"/>
</dbReference>
<dbReference type="InterPro" id="IPR012128">
    <property type="entry name" value="Phycobilisome_asu/bsu"/>
</dbReference>
<dbReference type="InterPro" id="IPR038719">
    <property type="entry name" value="Phycobilisome_asu/bsu_sf"/>
</dbReference>
<dbReference type="InterPro" id="IPR006247">
    <property type="entry name" value="Phycocyanin_b"/>
</dbReference>
<dbReference type="NCBIfam" id="TIGR01339">
    <property type="entry name" value="phycocy_beta"/>
    <property type="match status" value="1"/>
</dbReference>
<dbReference type="PANTHER" id="PTHR34011:SF7">
    <property type="entry name" value="C-PHYCOCYANIN BETA SUBUNIT"/>
    <property type="match status" value="1"/>
</dbReference>
<dbReference type="PANTHER" id="PTHR34011">
    <property type="entry name" value="PHYCOBILISOME 32.1 KDA LINKER POLYPEPTIDE, PHYCOCYANIN-ASSOCIATED, ROD 2-RELATED"/>
    <property type="match status" value="1"/>
</dbReference>
<dbReference type="Pfam" id="PF00502">
    <property type="entry name" value="Phycobilisome"/>
    <property type="match status" value="1"/>
</dbReference>
<dbReference type="PIRSF" id="PIRSF000081">
    <property type="entry name" value="Phycocyanin"/>
    <property type="match status" value="1"/>
</dbReference>
<dbReference type="SUPFAM" id="SSF46458">
    <property type="entry name" value="Globin-like"/>
    <property type="match status" value="1"/>
</dbReference>
<keyword id="KW-0042">Antenna complex</keyword>
<keyword id="KW-0089">Bile pigment</keyword>
<keyword id="KW-0157">Chromophore</keyword>
<keyword id="KW-0249">Electron transport</keyword>
<keyword id="KW-0472">Membrane</keyword>
<keyword id="KW-0488">Methylation</keyword>
<keyword id="KW-0602">Photosynthesis</keyword>
<keyword id="KW-0605">Phycobilisome</keyword>
<keyword id="KW-0793">Thylakoid</keyword>
<keyword id="KW-0813">Transport</keyword>
<sequence>MTFDAFTKVVAQADARGEFLSDAQLDALSRLVAEGNKRIDTVNRITGNASSIVANAARALFAEQPSLIAPGGNVYTNRRMAACLRDMEIILRYVTYAVFTGDASILDDRCLNGLRETYLALGVPGASVAEGVRKMKDAAVAIVSDRNGITQGDCSAIISELGSYFDKAAAAVA</sequence>